<comment type="function">
    <text evidence="2">Interconverts simultaneously and stereospecifically pyruvate and lactate with concomitant interconversion of NADH and NAD(+).</text>
</comment>
<comment type="catalytic activity">
    <reaction evidence="2">
        <text>(S)-lactate + NAD(+) = pyruvate + NADH + H(+)</text>
        <dbReference type="Rhea" id="RHEA:23444"/>
        <dbReference type="ChEBI" id="CHEBI:15361"/>
        <dbReference type="ChEBI" id="CHEBI:15378"/>
        <dbReference type="ChEBI" id="CHEBI:16651"/>
        <dbReference type="ChEBI" id="CHEBI:57540"/>
        <dbReference type="ChEBI" id="CHEBI:57945"/>
        <dbReference type="EC" id="1.1.1.27"/>
    </reaction>
    <physiologicalReaction direction="left-to-right" evidence="2">
        <dbReference type="Rhea" id="RHEA:23445"/>
    </physiologicalReaction>
    <physiologicalReaction direction="right-to-left" evidence="2">
        <dbReference type="Rhea" id="RHEA:23446"/>
    </physiologicalReaction>
</comment>
<comment type="pathway">
    <text evidence="2">Fermentation; pyruvate fermentation to lactate; (S)-lactate from pyruvate: step 1/1.</text>
</comment>
<comment type="subunit">
    <text evidence="1">Homotetramer.</text>
</comment>
<comment type="subcellular location">
    <subcellularLocation>
        <location evidence="1">Cytoplasm</location>
    </subcellularLocation>
</comment>
<comment type="similarity">
    <text evidence="3">Belongs to the LDH/MDH superfamily. LDH family.</text>
</comment>
<gene>
    <name type="primary">LDHB</name>
</gene>
<evidence type="ECO:0000250" key="1"/>
<evidence type="ECO:0000250" key="2">
    <source>
        <dbReference type="UniProtKB" id="P07195"/>
    </source>
</evidence>
<evidence type="ECO:0000305" key="3"/>
<organism>
    <name type="scientific">Trachemys scripta elegans</name>
    <name type="common">Red-eared slider turtle</name>
    <name type="synonym">Emys elegans</name>
    <dbReference type="NCBI Taxonomy" id="31138"/>
    <lineage>
        <taxon>Eukaryota</taxon>
        <taxon>Metazoa</taxon>
        <taxon>Chordata</taxon>
        <taxon>Craniata</taxon>
        <taxon>Vertebrata</taxon>
        <taxon>Euteleostomi</taxon>
        <taxon>Archelosauria</taxon>
        <taxon>Testudinata</taxon>
        <taxon>Testudines</taxon>
        <taxon>Cryptodira</taxon>
        <taxon>Durocryptodira</taxon>
        <taxon>Testudinoidea</taxon>
        <taxon>Emydidae</taxon>
        <taxon>Trachemys</taxon>
    </lineage>
</organism>
<name>LDHB_TRASE</name>
<keyword id="KW-0963">Cytoplasm</keyword>
<keyword id="KW-0520">NAD</keyword>
<keyword id="KW-0560">Oxidoreductase</keyword>
<proteinExistence type="evidence at transcript level"/>
<feature type="initiator methionine" description="Removed" evidence="1">
    <location>
        <position position="1"/>
    </location>
</feature>
<feature type="chain" id="PRO_0000168473" description="L-lactate dehydrogenase B chain">
    <location>
        <begin position="2"/>
        <end position="333"/>
    </location>
</feature>
<feature type="active site" description="Proton acceptor" evidence="1">
    <location>
        <position position="193"/>
    </location>
</feature>
<feature type="binding site" evidence="1">
    <location>
        <begin position="29"/>
        <end position="57"/>
    </location>
    <ligand>
        <name>NAD(+)</name>
        <dbReference type="ChEBI" id="CHEBI:57540"/>
    </ligand>
</feature>
<feature type="binding site" evidence="1">
    <location>
        <position position="99"/>
    </location>
    <ligand>
        <name>NAD(+)</name>
        <dbReference type="ChEBI" id="CHEBI:57540"/>
    </ligand>
</feature>
<feature type="binding site" evidence="1">
    <location>
        <position position="106"/>
    </location>
    <ligand>
        <name>substrate</name>
    </ligand>
</feature>
<feature type="binding site" evidence="1">
    <location>
        <position position="138"/>
    </location>
    <ligand>
        <name>NAD(+)</name>
        <dbReference type="ChEBI" id="CHEBI:57540"/>
    </ligand>
</feature>
<feature type="binding site" evidence="1">
    <location>
        <position position="138"/>
    </location>
    <ligand>
        <name>substrate</name>
    </ligand>
</feature>
<feature type="binding site" evidence="1">
    <location>
        <position position="169"/>
    </location>
    <ligand>
        <name>substrate</name>
    </ligand>
</feature>
<feature type="binding site" evidence="1">
    <location>
        <position position="248"/>
    </location>
    <ligand>
        <name>substrate</name>
    </ligand>
</feature>
<sequence>MATLQEKLITPIAAESTTPNNKITVVGVGQVGMACAISILGKGLCDELALVDVWEDKLKGEMMDLQHGSLVLQTHKIVADKDYAVTANSKIVVVTAGVRQQEGESRLNLVQRNVNVFKFIIPQIMKYSPNCTILVVSNPVDILTYVTWKLSGLPKHRVIGSGCNLDSARFRHLMAEKLGIHPTSCHGWILGEHGDSSVAVWSGVNVAGVSLQELNPAMGTDRDSENWKEVHKLVVDSAYEVIKLKGYTNWAIGFSVADLIESMLKNLCRVHPVSTMVKGMYGIENEVFLSLPCVLSASGLTSVINQKLKDEEVAQLKKSADTLWGIQKDLKDL</sequence>
<reference key="1">
    <citation type="journal article" date="1997" name="Mol. Biol. Evol.">
        <title>The cDNA cloning and molecular evolution of reptile and pigeon lactate dehydrogenase isozymes.</title>
        <authorList>
            <person name="Mannen H."/>
            <person name="Tsoi S.C.-M."/>
            <person name="Krushkal J.S."/>
            <person name="Li W.-H."/>
            <person name="Li S.S.-L."/>
        </authorList>
    </citation>
    <scope>NUCLEOTIDE SEQUENCE [MRNA]</scope>
    <source>
        <tissue>Muscle</tissue>
    </source>
</reference>
<dbReference type="EC" id="1.1.1.27" evidence="2"/>
<dbReference type="EMBL" id="L79954">
    <property type="protein sequence ID" value="AAD46980.1"/>
    <property type="molecule type" value="mRNA"/>
</dbReference>
<dbReference type="SMR" id="Q9PT42"/>
<dbReference type="UniPathway" id="UPA00554">
    <property type="reaction ID" value="UER00611"/>
</dbReference>
<dbReference type="GO" id="GO:0005737">
    <property type="term" value="C:cytoplasm"/>
    <property type="evidence" value="ECO:0007669"/>
    <property type="project" value="UniProtKB-SubCell"/>
</dbReference>
<dbReference type="GO" id="GO:0004459">
    <property type="term" value="F:L-lactate dehydrogenase activity"/>
    <property type="evidence" value="ECO:0007669"/>
    <property type="project" value="UniProtKB-EC"/>
</dbReference>
<dbReference type="GO" id="GO:0006089">
    <property type="term" value="P:lactate metabolic process"/>
    <property type="evidence" value="ECO:0007669"/>
    <property type="project" value="TreeGrafter"/>
</dbReference>
<dbReference type="CDD" id="cd05293">
    <property type="entry name" value="LDH_1"/>
    <property type="match status" value="1"/>
</dbReference>
<dbReference type="FunFam" id="3.40.50.720:FF:000029">
    <property type="entry name" value="L-lactate dehydrogenase A chain"/>
    <property type="match status" value="1"/>
</dbReference>
<dbReference type="FunFam" id="3.90.110.10:FF:000003">
    <property type="entry name" value="L-lactate dehydrogenase A chain"/>
    <property type="match status" value="1"/>
</dbReference>
<dbReference type="Gene3D" id="3.90.110.10">
    <property type="entry name" value="Lactate dehydrogenase/glycoside hydrolase, family 4, C-terminal"/>
    <property type="match status" value="1"/>
</dbReference>
<dbReference type="Gene3D" id="3.40.50.720">
    <property type="entry name" value="NAD(P)-binding Rossmann-like Domain"/>
    <property type="match status" value="1"/>
</dbReference>
<dbReference type="HAMAP" id="MF_00488">
    <property type="entry name" value="Lactate_dehydrog"/>
    <property type="match status" value="1"/>
</dbReference>
<dbReference type="InterPro" id="IPR001557">
    <property type="entry name" value="L-lactate/malate_DH"/>
</dbReference>
<dbReference type="InterPro" id="IPR011304">
    <property type="entry name" value="L-lactate_DH"/>
</dbReference>
<dbReference type="InterPro" id="IPR018177">
    <property type="entry name" value="L-lactate_DH_AS"/>
</dbReference>
<dbReference type="InterPro" id="IPR022383">
    <property type="entry name" value="Lactate/malate_DH_C"/>
</dbReference>
<dbReference type="InterPro" id="IPR001236">
    <property type="entry name" value="Lactate/malate_DH_N"/>
</dbReference>
<dbReference type="InterPro" id="IPR015955">
    <property type="entry name" value="Lactate_DH/Glyco_Ohase_4_C"/>
</dbReference>
<dbReference type="InterPro" id="IPR036291">
    <property type="entry name" value="NAD(P)-bd_dom_sf"/>
</dbReference>
<dbReference type="NCBIfam" id="TIGR01771">
    <property type="entry name" value="L-LDH-NAD"/>
    <property type="match status" value="1"/>
</dbReference>
<dbReference type="PANTHER" id="PTHR43128">
    <property type="entry name" value="L-2-HYDROXYCARBOXYLATE DEHYDROGENASE (NAD(P)(+))"/>
    <property type="match status" value="1"/>
</dbReference>
<dbReference type="PANTHER" id="PTHR43128:SF2">
    <property type="entry name" value="L-LACTATE DEHYDROGENASE B CHAIN"/>
    <property type="match status" value="1"/>
</dbReference>
<dbReference type="Pfam" id="PF02866">
    <property type="entry name" value="Ldh_1_C"/>
    <property type="match status" value="1"/>
</dbReference>
<dbReference type="Pfam" id="PF00056">
    <property type="entry name" value="Ldh_1_N"/>
    <property type="match status" value="1"/>
</dbReference>
<dbReference type="PIRSF" id="PIRSF000102">
    <property type="entry name" value="Lac_mal_DH"/>
    <property type="match status" value="1"/>
</dbReference>
<dbReference type="PRINTS" id="PR00086">
    <property type="entry name" value="LLDHDRGNASE"/>
</dbReference>
<dbReference type="SUPFAM" id="SSF56327">
    <property type="entry name" value="LDH C-terminal domain-like"/>
    <property type="match status" value="1"/>
</dbReference>
<dbReference type="SUPFAM" id="SSF51735">
    <property type="entry name" value="NAD(P)-binding Rossmann-fold domains"/>
    <property type="match status" value="1"/>
</dbReference>
<dbReference type="PROSITE" id="PS00064">
    <property type="entry name" value="L_LDH"/>
    <property type="match status" value="1"/>
</dbReference>
<protein>
    <recommendedName>
        <fullName>L-lactate dehydrogenase B chain</fullName>
        <shortName>LDH-B</shortName>
        <ecNumber evidence="2">1.1.1.27</ecNumber>
    </recommendedName>
</protein>
<accession>Q9PT42</accession>